<accession>Q2NHA5</accession>
<comment type="function">
    <text evidence="1">Catalyzes the decarboxylation of orotidine 5'-monophosphate (OMP) to uridine 5'-monophosphate (UMP).</text>
</comment>
<comment type="catalytic activity">
    <reaction evidence="1">
        <text>orotidine 5'-phosphate + H(+) = UMP + CO2</text>
        <dbReference type="Rhea" id="RHEA:11596"/>
        <dbReference type="ChEBI" id="CHEBI:15378"/>
        <dbReference type="ChEBI" id="CHEBI:16526"/>
        <dbReference type="ChEBI" id="CHEBI:57538"/>
        <dbReference type="ChEBI" id="CHEBI:57865"/>
        <dbReference type="EC" id="4.1.1.23"/>
    </reaction>
</comment>
<comment type="pathway">
    <text evidence="1">Pyrimidine metabolism; UMP biosynthesis via de novo pathway; UMP from orotate: step 2/2.</text>
</comment>
<comment type="subunit">
    <text evidence="1">Homodimer.</text>
</comment>
<comment type="similarity">
    <text evidence="1">Belongs to the OMP decarboxylase family. Type 1 subfamily.</text>
</comment>
<proteinExistence type="inferred from homology"/>
<name>PYRF_METST</name>
<protein>
    <recommendedName>
        <fullName evidence="1">Orotidine 5'-phosphate decarboxylase</fullName>
        <ecNumber evidence="1">4.1.1.23</ecNumber>
    </recommendedName>
    <alternativeName>
        <fullName evidence="1">OMP decarboxylase</fullName>
        <shortName evidence="1">OMPDCase</shortName>
        <shortName evidence="1">OMPdecase</shortName>
    </alternativeName>
</protein>
<evidence type="ECO:0000255" key="1">
    <source>
        <dbReference type="HAMAP-Rule" id="MF_01200"/>
    </source>
</evidence>
<keyword id="KW-0210">Decarboxylase</keyword>
<keyword id="KW-0456">Lyase</keyword>
<keyword id="KW-0665">Pyrimidine biosynthesis</keyword>
<keyword id="KW-1185">Reference proteome</keyword>
<dbReference type="EC" id="4.1.1.23" evidence="1"/>
<dbReference type="EMBL" id="CP000102">
    <property type="protein sequence ID" value="ABC56798.1"/>
    <property type="molecule type" value="Genomic_DNA"/>
</dbReference>
<dbReference type="RefSeq" id="WP_011405998.1">
    <property type="nucleotide sequence ID" value="NC_007681.1"/>
</dbReference>
<dbReference type="SMR" id="Q2NHA5"/>
<dbReference type="STRING" id="339860.Msp_0397"/>
<dbReference type="GeneID" id="41324971"/>
<dbReference type="KEGG" id="mst:Msp_0397"/>
<dbReference type="eggNOG" id="arCOG00081">
    <property type="taxonomic scope" value="Archaea"/>
</dbReference>
<dbReference type="HOGENOM" id="CLU_067069_2_0_2"/>
<dbReference type="OrthoDB" id="94124at2157"/>
<dbReference type="UniPathway" id="UPA00070">
    <property type="reaction ID" value="UER00120"/>
</dbReference>
<dbReference type="Proteomes" id="UP000001931">
    <property type="component" value="Chromosome"/>
</dbReference>
<dbReference type="GO" id="GO:0005829">
    <property type="term" value="C:cytosol"/>
    <property type="evidence" value="ECO:0007669"/>
    <property type="project" value="TreeGrafter"/>
</dbReference>
<dbReference type="GO" id="GO:0004590">
    <property type="term" value="F:orotidine-5'-phosphate decarboxylase activity"/>
    <property type="evidence" value="ECO:0007669"/>
    <property type="project" value="UniProtKB-UniRule"/>
</dbReference>
<dbReference type="GO" id="GO:0006207">
    <property type="term" value="P:'de novo' pyrimidine nucleobase biosynthetic process"/>
    <property type="evidence" value="ECO:0007669"/>
    <property type="project" value="InterPro"/>
</dbReference>
<dbReference type="GO" id="GO:0044205">
    <property type="term" value="P:'de novo' UMP biosynthetic process"/>
    <property type="evidence" value="ECO:0007669"/>
    <property type="project" value="UniProtKB-UniRule"/>
</dbReference>
<dbReference type="CDD" id="cd04725">
    <property type="entry name" value="OMP_decarboxylase_like"/>
    <property type="match status" value="1"/>
</dbReference>
<dbReference type="Gene3D" id="3.20.20.70">
    <property type="entry name" value="Aldolase class I"/>
    <property type="match status" value="1"/>
</dbReference>
<dbReference type="HAMAP" id="MF_01200_A">
    <property type="entry name" value="OMPdecase_type1_A"/>
    <property type="match status" value="1"/>
</dbReference>
<dbReference type="InterPro" id="IPR013785">
    <property type="entry name" value="Aldolase_TIM"/>
</dbReference>
<dbReference type="InterPro" id="IPR014732">
    <property type="entry name" value="OMPdecase"/>
</dbReference>
<dbReference type="InterPro" id="IPR047595">
    <property type="entry name" value="OMPdecase_arc"/>
</dbReference>
<dbReference type="InterPro" id="IPR018089">
    <property type="entry name" value="OMPdecase_AS"/>
</dbReference>
<dbReference type="InterPro" id="IPR001754">
    <property type="entry name" value="OMPdeCOase_dom"/>
</dbReference>
<dbReference type="InterPro" id="IPR011060">
    <property type="entry name" value="RibuloseP-bd_barrel"/>
</dbReference>
<dbReference type="NCBIfam" id="NF010386">
    <property type="entry name" value="PRK13813.1"/>
    <property type="match status" value="1"/>
</dbReference>
<dbReference type="NCBIfam" id="TIGR01740">
    <property type="entry name" value="pyrF"/>
    <property type="match status" value="1"/>
</dbReference>
<dbReference type="PANTHER" id="PTHR32119">
    <property type="entry name" value="OROTIDINE 5'-PHOSPHATE DECARBOXYLASE"/>
    <property type="match status" value="1"/>
</dbReference>
<dbReference type="PANTHER" id="PTHR32119:SF2">
    <property type="entry name" value="OROTIDINE 5'-PHOSPHATE DECARBOXYLASE"/>
    <property type="match status" value="1"/>
</dbReference>
<dbReference type="Pfam" id="PF00215">
    <property type="entry name" value="OMPdecase"/>
    <property type="match status" value="1"/>
</dbReference>
<dbReference type="SMART" id="SM00934">
    <property type="entry name" value="OMPdecase"/>
    <property type="match status" value="1"/>
</dbReference>
<dbReference type="SUPFAM" id="SSF51366">
    <property type="entry name" value="Ribulose-phoshate binding barrel"/>
    <property type="match status" value="1"/>
</dbReference>
<dbReference type="PROSITE" id="PS00156">
    <property type="entry name" value="OMPDECASE"/>
    <property type="match status" value="1"/>
</dbReference>
<organism>
    <name type="scientific">Methanosphaera stadtmanae (strain ATCC 43021 / DSM 3091 / JCM 11832 / MCB-3)</name>
    <dbReference type="NCBI Taxonomy" id="339860"/>
    <lineage>
        <taxon>Archaea</taxon>
        <taxon>Methanobacteriati</taxon>
        <taxon>Methanobacteriota</taxon>
        <taxon>Methanomada group</taxon>
        <taxon>Methanobacteria</taxon>
        <taxon>Methanobacteriales</taxon>
        <taxon>Methanobacteriaceae</taxon>
        <taxon>Methanosphaera</taxon>
    </lineage>
</organism>
<gene>
    <name evidence="1" type="primary">pyrF</name>
    <name type="ordered locus">Msp_0397</name>
</gene>
<sequence length="216" mass="23665">MNVKNQIILALDVEEKNKAYEILDQTTEYLDTIKIGYPITLALGPSIITSIKEEYDVKIIADFKVADIDATNEKIVKTTLNYGADAIIVHGFTGEDSVLACKNMAEKLDKEIFLLTEMSHPGADKFLKPVSLDIAQMGVDLGIKNYVAPATKIDRLKKIREVVGKDSFIISPGVGFQGGNAKDTLQYSNAAIVGRSIYNASNPKKALEEIIESIKV</sequence>
<reference key="1">
    <citation type="journal article" date="2006" name="J. Bacteriol.">
        <title>The genome sequence of Methanosphaera stadtmanae reveals why this human intestinal archaeon is restricted to methanol and H2 for methane formation and ATP synthesis.</title>
        <authorList>
            <person name="Fricke W.F."/>
            <person name="Seedorf H."/>
            <person name="Henne A."/>
            <person name="Kruer M."/>
            <person name="Liesegang H."/>
            <person name="Hedderich R."/>
            <person name="Gottschalk G."/>
            <person name="Thauer R.K."/>
        </authorList>
    </citation>
    <scope>NUCLEOTIDE SEQUENCE [LARGE SCALE GENOMIC DNA]</scope>
    <source>
        <strain>ATCC 43021 / DSM 3091 / JCM 11832 / MCB-3</strain>
    </source>
</reference>
<feature type="chain" id="PRO_0000241937" description="Orotidine 5'-phosphate decarboxylase">
    <location>
        <begin position="1"/>
        <end position="216"/>
    </location>
</feature>
<feature type="active site" description="Proton donor" evidence="1">
    <location>
        <position position="64"/>
    </location>
</feature>
<feature type="binding site" evidence="1">
    <location>
        <position position="12"/>
    </location>
    <ligand>
        <name>substrate</name>
    </ligand>
</feature>
<feature type="binding site" evidence="1">
    <location>
        <position position="34"/>
    </location>
    <ligand>
        <name>substrate</name>
    </ligand>
</feature>
<feature type="binding site" evidence="1">
    <location>
        <begin position="62"/>
        <end position="71"/>
    </location>
    <ligand>
        <name>substrate</name>
    </ligand>
</feature>
<feature type="binding site" evidence="1">
    <location>
        <position position="119"/>
    </location>
    <ligand>
        <name>substrate</name>
    </ligand>
</feature>
<feature type="binding site" evidence="1">
    <location>
        <begin position="172"/>
        <end position="182"/>
    </location>
    <ligand>
        <name>substrate</name>
    </ligand>
</feature>
<feature type="binding site" evidence="1">
    <location>
        <position position="194"/>
    </location>
    <ligand>
        <name>substrate</name>
    </ligand>
</feature>
<feature type="binding site" evidence="1">
    <location>
        <position position="195"/>
    </location>
    <ligand>
        <name>substrate</name>
    </ligand>
</feature>